<organism>
    <name type="scientific">Salmonella agona (strain SL483)</name>
    <dbReference type="NCBI Taxonomy" id="454166"/>
    <lineage>
        <taxon>Bacteria</taxon>
        <taxon>Pseudomonadati</taxon>
        <taxon>Pseudomonadota</taxon>
        <taxon>Gammaproteobacteria</taxon>
        <taxon>Enterobacterales</taxon>
        <taxon>Enterobacteriaceae</taxon>
        <taxon>Salmonella</taxon>
    </lineage>
</organism>
<proteinExistence type="inferred from homology"/>
<accession>B5EZH6</accession>
<name>ARNB_SALA4</name>
<protein>
    <recommendedName>
        <fullName evidence="1">UDP-4-amino-4-deoxy-L-arabinose--oxoglutarate aminotransferase</fullName>
        <ecNumber evidence="1">2.6.1.87</ecNumber>
    </recommendedName>
    <alternativeName>
        <fullName evidence="1">UDP-(beta-L-threo-pentapyranosyl-4''-ulose diphosphate) aminotransferase</fullName>
        <shortName evidence="1">UDP-Ara4O aminotransferase</shortName>
    </alternativeName>
    <alternativeName>
        <fullName evidence="1">UDP-4-amino-4-deoxy-L-arabinose aminotransferase</fullName>
    </alternativeName>
</protein>
<evidence type="ECO:0000255" key="1">
    <source>
        <dbReference type="HAMAP-Rule" id="MF_01167"/>
    </source>
</evidence>
<gene>
    <name evidence="1" type="primary">arnB</name>
    <name type="ordered locus">SeAg_B2433</name>
</gene>
<reference key="1">
    <citation type="journal article" date="2011" name="J. Bacteriol.">
        <title>Comparative genomics of 28 Salmonella enterica isolates: evidence for CRISPR-mediated adaptive sublineage evolution.</title>
        <authorList>
            <person name="Fricke W.F."/>
            <person name="Mammel M.K."/>
            <person name="McDermott P.F."/>
            <person name="Tartera C."/>
            <person name="White D.G."/>
            <person name="Leclerc J.E."/>
            <person name="Ravel J."/>
            <person name="Cebula T.A."/>
        </authorList>
    </citation>
    <scope>NUCLEOTIDE SEQUENCE [LARGE SCALE GENOMIC DNA]</scope>
    <source>
        <strain>SL483</strain>
    </source>
</reference>
<comment type="function">
    <text evidence="1">Catalyzes the conversion of UDP-4-keto-arabinose (UDP-Ara4O) to UDP-4-amino-4-deoxy-L-arabinose (UDP-L-Ara4N). The modified arabinose is attached to lipid A and is required for resistance to polymyxin and cationic antimicrobial peptides.</text>
</comment>
<comment type="catalytic activity">
    <reaction evidence="1">
        <text>UDP-4-amino-4-deoxy-beta-L-arabinose + 2-oxoglutarate = UDP-beta-L-threo-pentopyranos-4-ulose + L-glutamate</text>
        <dbReference type="Rhea" id="RHEA:24710"/>
        <dbReference type="ChEBI" id="CHEBI:16810"/>
        <dbReference type="ChEBI" id="CHEBI:29985"/>
        <dbReference type="ChEBI" id="CHEBI:58708"/>
        <dbReference type="ChEBI" id="CHEBI:58710"/>
        <dbReference type="EC" id="2.6.1.87"/>
    </reaction>
</comment>
<comment type="cofactor">
    <cofactor evidence="1">
        <name>pyridoxal 5'-phosphate</name>
        <dbReference type="ChEBI" id="CHEBI:597326"/>
    </cofactor>
</comment>
<comment type="pathway">
    <text evidence="1">Nucleotide-sugar biosynthesis; UDP-4-deoxy-4-formamido-beta-L-arabinose biosynthesis; UDP-4-deoxy-4-formamido-beta-L-arabinose from UDP-alpha-D-glucuronate: step 2/3.</text>
</comment>
<comment type="pathway">
    <text evidence="1">Bacterial outer membrane biogenesis; lipopolysaccharide biosynthesis.</text>
</comment>
<comment type="subunit">
    <text evidence="1">Homodimer.</text>
</comment>
<comment type="similarity">
    <text evidence="1">Belongs to the DegT/DnrJ/EryC1 family. ArnB subfamily.</text>
</comment>
<keyword id="KW-0032">Aminotransferase</keyword>
<keyword id="KW-0046">Antibiotic resistance</keyword>
<keyword id="KW-0441">Lipid A biosynthesis</keyword>
<keyword id="KW-0444">Lipid biosynthesis</keyword>
<keyword id="KW-0443">Lipid metabolism</keyword>
<keyword id="KW-0448">Lipopolysaccharide biosynthesis</keyword>
<keyword id="KW-0663">Pyridoxal phosphate</keyword>
<keyword id="KW-0808">Transferase</keyword>
<dbReference type="EC" id="2.6.1.87" evidence="1"/>
<dbReference type="EMBL" id="CP001138">
    <property type="protein sequence ID" value="ACH52144.1"/>
    <property type="molecule type" value="Genomic_DNA"/>
</dbReference>
<dbReference type="RefSeq" id="WP_001279291.1">
    <property type="nucleotide sequence ID" value="NC_011149.1"/>
</dbReference>
<dbReference type="SMR" id="B5EZH6"/>
<dbReference type="KEGG" id="sea:SeAg_B2433"/>
<dbReference type="HOGENOM" id="CLU_033332_0_3_6"/>
<dbReference type="UniPathway" id="UPA00030"/>
<dbReference type="UniPathway" id="UPA00032">
    <property type="reaction ID" value="UER00493"/>
</dbReference>
<dbReference type="Proteomes" id="UP000008819">
    <property type="component" value="Chromosome"/>
</dbReference>
<dbReference type="GO" id="GO:0016020">
    <property type="term" value="C:membrane"/>
    <property type="evidence" value="ECO:0007669"/>
    <property type="project" value="GOC"/>
</dbReference>
<dbReference type="GO" id="GO:0030170">
    <property type="term" value="F:pyridoxal phosphate binding"/>
    <property type="evidence" value="ECO:0007669"/>
    <property type="project" value="TreeGrafter"/>
</dbReference>
<dbReference type="GO" id="GO:0099620">
    <property type="term" value="F:UDP-4-amino-4-deoxy-L-arabinose aminotransferase"/>
    <property type="evidence" value="ECO:0007669"/>
    <property type="project" value="UniProtKB-EC"/>
</dbReference>
<dbReference type="GO" id="GO:0009245">
    <property type="term" value="P:lipid A biosynthetic process"/>
    <property type="evidence" value="ECO:0007669"/>
    <property type="project" value="UniProtKB-KW"/>
</dbReference>
<dbReference type="GO" id="GO:0009103">
    <property type="term" value="P:lipopolysaccharide biosynthetic process"/>
    <property type="evidence" value="ECO:0007669"/>
    <property type="project" value="UniProtKB-UniRule"/>
</dbReference>
<dbReference type="GO" id="GO:0046677">
    <property type="term" value="P:response to antibiotic"/>
    <property type="evidence" value="ECO:0007669"/>
    <property type="project" value="UniProtKB-KW"/>
</dbReference>
<dbReference type="CDD" id="cd00616">
    <property type="entry name" value="AHBA_syn"/>
    <property type="match status" value="1"/>
</dbReference>
<dbReference type="FunFam" id="3.40.640.10:FF:000040">
    <property type="entry name" value="UDP-4-amino-4-deoxy-L-arabinose--oxoglutarate aminotransferase"/>
    <property type="match status" value="1"/>
</dbReference>
<dbReference type="FunFam" id="3.90.1150.10:FF:000030">
    <property type="entry name" value="UDP-4-amino-4-deoxy-L-arabinose--oxoglutarate aminotransferase"/>
    <property type="match status" value="1"/>
</dbReference>
<dbReference type="Gene3D" id="3.90.1150.10">
    <property type="entry name" value="Aspartate Aminotransferase, domain 1"/>
    <property type="match status" value="1"/>
</dbReference>
<dbReference type="Gene3D" id="3.40.640.10">
    <property type="entry name" value="Type I PLP-dependent aspartate aminotransferase-like (Major domain)"/>
    <property type="match status" value="1"/>
</dbReference>
<dbReference type="HAMAP" id="MF_01167">
    <property type="entry name" value="ArnB_transfer"/>
    <property type="match status" value="1"/>
</dbReference>
<dbReference type="InterPro" id="IPR022850">
    <property type="entry name" value="ArnB_NH2Trfase"/>
</dbReference>
<dbReference type="InterPro" id="IPR000653">
    <property type="entry name" value="DegT/StrS_aminotransferase"/>
</dbReference>
<dbReference type="InterPro" id="IPR015424">
    <property type="entry name" value="PyrdxlP-dep_Trfase"/>
</dbReference>
<dbReference type="InterPro" id="IPR015421">
    <property type="entry name" value="PyrdxlP-dep_Trfase_major"/>
</dbReference>
<dbReference type="InterPro" id="IPR015422">
    <property type="entry name" value="PyrdxlP-dep_Trfase_small"/>
</dbReference>
<dbReference type="NCBIfam" id="NF008658">
    <property type="entry name" value="PRK11658.1"/>
    <property type="match status" value="1"/>
</dbReference>
<dbReference type="PANTHER" id="PTHR30244">
    <property type="entry name" value="TRANSAMINASE"/>
    <property type="match status" value="1"/>
</dbReference>
<dbReference type="PANTHER" id="PTHR30244:SF41">
    <property type="entry name" value="UDP-4-AMINO-4-DEOXY-L-ARABINOSE--OXOGLUTARATE AMINOTRANSFERASE"/>
    <property type="match status" value="1"/>
</dbReference>
<dbReference type="Pfam" id="PF01041">
    <property type="entry name" value="DegT_DnrJ_EryC1"/>
    <property type="match status" value="1"/>
</dbReference>
<dbReference type="PIRSF" id="PIRSF000390">
    <property type="entry name" value="PLP_StrS"/>
    <property type="match status" value="1"/>
</dbReference>
<dbReference type="SUPFAM" id="SSF53383">
    <property type="entry name" value="PLP-dependent transferases"/>
    <property type="match status" value="1"/>
</dbReference>
<feature type="chain" id="PRO_1000137962" description="UDP-4-amino-4-deoxy-L-arabinose--oxoglutarate aminotransferase">
    <location>
        <begin position="1"/>
        <end position="379"/>
    </location>
</feature>
<feature type="modified residue" description="N6-(pyridoxal phosphate)lysine" evidence="1">
    <location>
        <position position="182"/>
    </location>
</feature>
<sequence length="379" mass="41152">MSDFLPFSRPAMGAEELAAVKTVLDSGWITTGPKNQELEAAFCRLTGNQYAVAVSSATAGMHIALMALGIGEGDEVITPSMTWVSTLNMIVLLGATPVMVDVDRDTLMVTPEHIEAAITPQTKAIIPVHYAGAPADLDAIYALGERYGIPVIEDAAHATGTSYKGRHIGARGTAIFSFHAIKNITCAEGGIVVTDNPQFADKLRSLKFHGLGVDAWDRQSGGRAPQAEVLAPGYKYNLPDLNAAIALAQLQKLDALNARRAAIAAQYHQAMADLPFQPLSLPSWEHIHAWHLFIIRVDEARCGITRDALMASLKTKGIGTGLHFRAAHTQKYYRERFPTLTLPDTEWNSERICSLPLFPDMTESDFDRVITALHQIAGQ</sequence>